<comment type="function">
    <text>Hydrolyzes glycerol-phospholipids at the terminal phosphodiesteric bond to generate phosphatidic acids (PA). Plays an important role in various cellular processes, including phytohormone action, vesicular trafficking, secretion, cytoskeletal arrangement, meiosis, tumor promotion, pathogenesis, membrane deterioration and senescence. Can use phosphatidylserine or N-acylphosphatidylethanolamine as substrates.</text>
</comment>
<comment type="catalytic activity">
    <reaction evidence="1">
        <text>a 1,2-diacyl-sn-glycero-3-phosphocholine + H2O = a 1,2-diacyl-sn-glycero-3-phosphate + choline + H(+)</text>
        <dbReference type="Rhea" id="RHEA:14445"/>
        <dbReference type="ChEBI" id="CHEBI:15354"/>
        <dbReference type="ChEBI" id="CHEBI:15377"/>
        <dbReference type="ChEBI" id="CHEBI:15378"/>
        <dbReference type="ChEBI" id="CHEBI:57643"/>
        <dbReference type="ChEBI" id="CHEBI:58608"/>
        <dbReference type="EC" id="3.1.4.4"/>
    </reaction>
</comment>
<comment type="cofactor">
    <cofactor evidence="1">
        <name>Ca(2+)</name>
        <dbReference type="ChEBI" id="CHEBI:29108"/>
    </cofactor>
    <text evidence="1">Ca(2+). Requires micromolar level (PIP2-dependent).</text>
</comment>
<comment type="activity regulation">
    <text>Inhibited by neomycin.</text>
</comment>
<comment type="interaction">
    <interactant intactId="EBI-25512318">
        <id>O23078</id>
    </interactant>
    <interactant intactId="EBI-4426144">
        <id>Q9C9L2</id>
        <label>TCP15</label>
    </interactant>
    <organismsDiffer>false</organismsDiffer>
    <experiments>3</experiments>
</comment>
<comment type="interaction">
    <interactant intactId="EBI-25512318">
        <id>O23078</id>
    </interactant>
    <interactant intactId="EBI-15192297">
        <id>Q9LQF0</id>
        <label>TCP23</label>
    </interactant>
    <organismsDiffer>false</organismsDiffer>
    <experiments>3</experiments>
</comment>
<comment type="interaction">
    <interactant intactId="EBI-25512318">
        <id>O23078</id>
    </interactant>
    <interactant intactId="EBI-15192677">
        <id>Q9FMX2</id>
        <label>TCP7</label>
    </interactant>
    <organismsDiffer>false</organismsDiffer>
    <experiments>3</experiments>
</comment>
<comment type="interaction">
    <interactant intactId="EBI-25512318">
        <id>O23078</id>
    </interactant>
    <interactant intactId="EBI-9838721">
        <id>O64647</id>
        <label>TCP9</label>
    </interactant>
    <organismsDiffer>false</organismsDiffer>
    <experiments>3</experiments>
</comment>
<comment type="subcellular location">
    <subcellularLocation>
        <location evidence="1">Cytoplasm</location>
    </subcellularLocation>
    <subcellularLocation>
        <location evidence="1">Membrane</location>
        <topology evidence="1">Peripheral membrane protein</topology>
    </subcellularLocation>
</comment>
<comment type="tissue specificity">
    <text evidence="4">Expressed in stems, and to a lower amount in leaves, flowers and siliques.</text>
</comment>
<comment type="induction">
    <text evidence="5">Activated by wounding, methyl jasmonate, heavy metal, osmotic and salt stresses. Up-regulated by phosphate limitation (PubMed:16384909).</text>
</comment>
<comment type="domain">
    <text evidence="7">C2 domain is a calcium-binding fold, and the binding promotes the protein association with membranes. In PLD beta, all the calcium-coordinating acidic amino acids are conserved.</text>
</comment>
<comment type="similarity">
    <text evidence="7">Belongs to the phospholipase D family. C2-PLD subfamily.</text>
</comment>
<comment type="sequence caution" evidence="7">
    <conflict type="erroneous gene model prediction">
        <sequence resource="EMBL-CDS" id="AAB62845"/>
    </conflict>
</comment>
<comment type="sequence caution" evidence="7">
    <conflict type="erroneous gene model prediction">
        <sequence resource="EMBL-CDS" id="AAF02803"/>
    </conflict>
</comment>
<comment type="sequence caution" evidence="7">
    <conflict type="erroneous gene model prediction">
        <sequence resource="EMBL-CDS" id="CAB80782"/>
    </conflict>
</comment>
<keyword id="KW-0106">Calcium</keyword>
<keyword id="KW-0963">Cytoplasm</keyword>
<keyword id="KW-0378">Hydrolase</keyword>
<keyword id="KW-0442">Lipid degradation</keyword>
<keyword id="KW-0443">Lipid metabolism</keyword>
<keyword id="KW-0472">Membrane</keyword>
<keyword id="KW-0479">Metal-binding</keyword>
<keyword id="KW-1185">Reference proteome</keyword>
<keyword id="KW-0677">Repeat</keyword>
<accession>O23078</accession>
<accession>F4JH27</accession>
<organism>
    <name type="scientific">Arabidopsis thaliana</name>
    <name type="common">Mouse-ear cress</name>
    <dbReference type="NCBI Taxonomy" id="3702"/>
    <lineage>
        <taxon>Eukaryota</taxon>
        <taxon>Viridiplantae</taxon>
        <taxon>Streptophyta</taxon>
        <taxon>Embryophyta</taxon>
        <taxon>Tracheophyta</taxon>
        <taxon>Spermatophyta</taxon>
        <taxon>Magnoliopsida</taxon>
        <taxon>eudicotyledons</taxon>
        <taxon>Gunneridae</taxon>
        <taxon>Pentapetalae</taxon>
        <taxon>rosids</taxon>
        <taxon>malvids</taxon>
        <taxon>Brassicales</taxon>
        <taxon>Brassicaceae</taxon>
        <taxon>Camelineae</taxon>
        <taxon>Arabidopsis</taxon>
    </lineage>
</organism>
<gene>
    <name evidence="6" type="primary">PLDBETA2</name>
    <name type="ordered locus">At4g00240</name>
    <name type="ORF">A_IG005I10.13</name>
    <name type="ORF">F5I10.13</name>
</gene>
<sequence length="927" mass="104155">MENYGWNYPYYPYRPPRPNPPYPAPPHHHGSMSHSGPLDHHHPPMSYYASFDYQHQPPPPYPPVSYYASFSSHSDLSYSGRLDSSGHGFTSTASPHSPGMHIVPFGKASLKVLLLHGNLDIWVSCANNLPNLDLFHKTLGVVFGGMTNMIEGQLSKKITSDPYVSISVAGAVIGRTYVISNSENPVWQQHFYVPVAHHAAEVHFVVKDSDAVGSQLIGIVTIPVEQIYSGARIEGTYSIRDSNGKPCKPGATLSLSIQYTSMNKLSVYHSGVGAGPYYQGVPGTYFPLREGGSVTLYQDAHVPEGMLPGIKLGNGMCYEHGKCWHDMFHAICQARRLIYITGWSVWHNVRLVRDKEDPSSECRLGELLRSKSQEGVRVLLLVWDDPTSQNILGYMTDGVMGTHDEETRRFFKDSSVQVLLCPRNAGKRHSWVKQREVGTIYTHHQKNLIVDADAGGNRRKIVAFVGGLDLCDGRYDTPQHPLFRTLQTDHNGDYHNPTFTGNVSGCPREPWHDLHSKIDGPAAYDVLTNFEERWLKAAKPHRINKLKTSYDDALLRIDRIPDILRVLDAPTVSANDPEAWHVQIFRSIDSNSVKGFPKDPKYATSKNLVCGKNVLIDMSIHTAYVKAIRAAQHFIYIENQYFIGSSYDWNAHKDIGANNLIPMEIALKIADKIRAKERFAAYIVIPMWPEGVPTGAATQRILYWQHKTMQMMYGTIYNALVEAGLEDEYSPQDYLNFFCLGNREMVNGNNESGTGSASNENTPQGLCRKSRRFMIYVHSKGMVVDDEYVVIGSANINQRSMEGTRDTEIAMGAYQPQHTWARRQSGPRGQIYGYRMSLWAEHMALLDDCFVEPESLGCVRKVRTVAEENWEQFRSEEVSEMRGHLMKYPVEVDRKGKVRPLPGSEEFPDVGGNVVGSFLAIQENLTI</sequence>
<feature type="chain" id="PRO_0000218811" description="Phospholipase D beta 2">
    <location>
        <begin position="1"/>
        <end position="927"/>
    </location>
</feature>
<feature type="domain" description="C2" evidence="2">
    <location>
        <begin position="104"/>
        <end position="237"/>
    </location>
</feature>
<feature type="domain" description="PLD phosphodiesterase 1" evidence="3">
    <location>
        <begin position="439"/>
        <end position="474"/>
    </location>
</feature>
<feature type="domain" description="PLD phosphodiesterase 2" evidence="3">
    <location>
        <begin position="773"/>
        <end position="800"/>
    </location>
</feature>
<feature type="active site" evidence="3">
    <location>
        <position position="444"/>
    </location>
</feature>
<feature type="active site" evidence="3">
    <location>
        <position position="446"/>
    </location>
</feature>
<feature type="active site" evidence="3">
    <location>
        <position position="451"/>
    </location>
</feature>
<feature type="active site" evidence="3">
    <location>
        <position position="778"/>
    </location>
</feature>
<feature type="active site" evidence="3">
    <location>
        <position position="780"/>
    </location>
</feature>
<feature type="active site" evidence="3">
    <location>
        <position position="785"/>
    </location>
</feature>
<feature type="binding site" evidence="1">
    <location>
        <position position="299"/>
    </location>
    <ligand>
        <name>Ca(2+)</name>
        <dbReference type="ChEBI" id="CHEBI:29108"/>
    </ligand>
</feature>
<feature type="binding site" evidence="1">
    <location>
        <position position="444"/>
    </location>
    <ligand>
        <name>a 1,2-diacyl-sn-glycero-3-phosphate</name>
        <dbReference type="ChEBI" id="CHEBI:58608"/>
    </ligand>
</feature>
<feature type="binding site" evidence="1">
    <location>
        <position position="480"/>
    </location>
    <ligand>
        <name>Ca(2+)</name>
        <dbReference type="ChEBI" id="CHEBI:29108"/>
    </ligand>
</feature>
<feature type="binding site" evidence="1">
    <location>
        <position position="512"/>
    </location>
    <ligand>
        <name>Ca(2+)</name>
        <dbReference type="ChEBI" id="CHEBI:29108"/>
    </ligand>
</feature>
<feature type="binding site" evidence="1">
    <location>
        <position position="640"/>
    </location>
    <ligand>
        <name>a 1,2-diacyl-sn-glycero-3-phosphate</name>
        <dbReference type="ChEBI" id="CHEBI:58608"/>
    </ligand>
</feature>
<feature type="binding site" evidence="1">
    <location>
        <position position="778"/>
    </location>
    <ligand>
        <name>a 1,2-diacyl-sn-glycero-3-phosphate</name>
        <dbReference type="ChEBI" id="CHEBI:58608"/>
    </ligand>
</feature>
<feature type="binding site" evidence="1">
    <location>
        <position position="841"/>
    </location>
    <ligand>
        <name>Ca(2+)</name>
        <dbReference type="ChEBI" id="CHEBI:29108"/>
    </ligand>
</feature>
<name>PLDB2_ARATH</name>
<dbReference type="EC" id="3.1.4.4" evidence="1"/>
<dbReference type="EMBL" id="AF013293">
    <property type="protein sequence ID" value="AAB62845.1"/>
    <property type="status" value="ALT_SEQ"/>
    <property type="molecule type" value="Genomic_DNA"/>
</dbReference>
<dbReference type="EMBL" id="AF195115">
    <property type="protein sequence ID" value="AAF02803.1"/>
    <property type="status" value="ALT_SEQ"/>
    <property type="molecule type" value="Genomic_DNA"/>
</dbReference>
<dbReference type="EMBL" id="AL161471">
    <property type="protein sequence ID" value="CAB80782.1"/>
    <property type="status" value="ALT_SEQ"/>
    <property type="molecule type" value="Genomic_DNA"/>
</dbReference>
<dbReference type="EMBL" id="CP002687">
    <property type="protein sequence ID" value="AEE81845.1"/>
    <property type="molecule type" value="Genomic_DNA"/>
</dbReference>
<dbReference type="RefSeq" id="NP_567160.1">
    <property type="nucleotide sequence ID" value="NM_116245.2"/>
</dbReference>
<dbReference type="SMR" id="O23078"/>
<dbReference type="BioGRID" id="11972">
    <property type="interactions" value="4"/>
</dbReference>
<dbReference type="FunCoup" id="O23078">
    <property type="interactions" value="156"/>
</dbReference>
<dbReference type="IntAct" id="O23078">
    <property type="interactions" value="4"/>
</dbReference>
<dbReference type="STRING" id="3702.O23078"/>
<dbReference type="iPTMnet" id="O23078"/>
<dbReference type="PaxDb" id="3702-AT4G00240.1"/>
<dbReference type="ProteomicsDB" id="234919"/>
<dbReference type="EnsemblPlants" id="AT4G00240.1">
    <property type="protein sequence ID" value="AT4G00240.1"/>
    <property type="gene ID" value="AT4G00240"/>
</dbReference>
<dbReference type="GeneID" id="826673"/>
<dbReference type="Gramene" id="AT4G00240.1">
    <property type="protein sequence ID" value="AT4G00240.1"/>
    <property type="gene ID" value="AT4G00240"/>
</dbReference>
<dbReference type="KEGG" id="ath:AT4G00240"/>
<dbReference type="Araport" id="AT4G00240"/>
<dbReference type="TAIR" id="AT4G00240">
    <property type="gene designation" value="PLDBETA2"/>
</dbReference>
<dbReference type="eggNOG" id="KOG1329">
    <property type="taxonomic scope" value="Eukaryota"/>
</dbReference>
<dbReference type="HOGENOM" id="CLU_004684_0_0_1"/>
<dbReference type="InParanoid" id="O23078"/>
<dbReference type="BioCyc" id="ARA:AT4G00240-MONOMER"/>
<dbReference type="PRO" id="PR:O23078"/>
<dbReference type="Proteomes" id="UP000006548">
    <property type="component" value="Chromosome 4"/>
</dbReference>
<dbReference type="ExpressionAtlas" id="O23078">
    <property type="expression patterns" value="baseline and differential"/>
</dbReference>
<dbReference type="GO" id="GO:0005737">
    <property type="term" value="C:cytoplasm"/>
    <property type="evidence" value="ECO:0007669"/>
    <property type="project" value="UniProtKB-SubCell"/>
</dbReference>
<dbReference type="GO" id="GO:0016020">
    <property type="term" value="C:membrane"/>
    <property type="evidence" value="ECO:0007669"/>
    <property type="project" value="UniProtKB-SubCell"/>
</dbReference>
<dbReference type="GO" id="GO:0005509">
    <property type="term" value="F:calcium ion binding"/>
    <property type="evidence" value="ECO:0007669"/>
    <property type="project" value="InterPro"/>
</dbReference>
<dbReference type="GO" id="GO:0004630">
    <property type="term" value="F:phospholipase D activity"/>
    <property type="evidence" value="ECO:0000314"/>
    <property type="project" value="TAIR"/>
</dbReference>
<dbReference type="GO" id="GO:0016042">
    <property type="term" value="P:lipid catabolic process"/>
    <property type="evidence" value="ECO:0007669"/>
    <property type="project" value="UniProtKB-KW"/>
</dbReference>
<dbReference type="GO" id="GO:0046470">
    <property type="term" value="P:phosphatidylcholine metabolic process"/>
    <property type="evidence" value="ECO:0007669"/>
    <property type="project" value="InterPro"/>
</dbReference>
<dbReference type="CDD" id="cd04015">
    <property type="entry name" value="C2_plant_PLD"/>
    <property type="match status" value="1"/>
</dbReference>
<dbReference type="FunFam" id="3.30.870.10:FF:000027">
    <property type="entry name" value="Phospholipase D"/>
    <property type="match status" value="1"/>
</dbReference>
<dbReference type="FunFam" id="2.60.40.150:FF:000193">
    <property type="entry name" value="Phospholipase D delta"/>
    <property type="match status" value="1"/>
</dbReference>
<dbReference type="FunFam" id="3.30.870.10:FF:000025">
    <property type="entry name" value="Phospholipase D delta"/>
    <property type="match status" value="1"/>
</dbReference>
<dbReference type="Gene3D" id="2.60.40.150">
    <property type="entry name" value="C2 domain"/>
    <property type="match status" value="1"/>
</dbReference>
<dbReference type="Gene3D" id="3.30.870.10">
    <property type="entry name" value="Endonuclease Chain A"/>
    <property type="match status" value="2"/>
</dbReference>
<dbReference type="InterPro" id="IPR000008">
    <property type="entry name" value="C2_dom"/>
</dbReference>
<dbReference type="InterPro" id="IPR035892">
    <property type="entry name" value="C2_domain_sf"/>
</dbReference>
<dbReference type="InterPro" id="IPR001736">
    <property type="entry name" value="PLipase_D/transphosphatidylase"/>
</dbReference>
<dbReference type="InterPro" id="IPR024632">
    <property type="entry name" value="PLipase_D_C"/>
</dbReference>
<dbReference type="InterPro" id="IPR015679">
    <property type="entry name" value="PLipase_D_fam"/>
</dbReference>
<dbReference type="InterPro" id="IPR011402">
    <property type="entry name" value="PLipase_D_pln"/>
</dbReference>
<dbReference type="PANTHER" id="PTHR18896">
    <property type="entry name" value="PHOSPHOLIPASE D"/>
    <property type="match status" value="1"/>
</dbReference>
<dbReference type="PANTHER" id="PTHR18896:SF148">
    <property type="entry name" value="PHOSPHOLIPASE D BETA 2"/>
    <property type="match status" value="1"/>
</dbReference>
<dbReference type="Pfam" id="PF00168">
    <property type="entry name" value="C2"/>
    <property type="match status" value="1"/>
</dbReference>
<dbReference type="Pfam" id="PF12357">
    <property type="entry name" value="PLD_C"/>
    <property type="match status" value="1"/>
</dbReference>
<dbReference type="Pfam" id="PF00614">
    <property type="entry name" value="PLDc"/>
    <property type="match status" value="2"/>
</dbReference>
<dbReference type="PIRSF" id="PIRSF036470">
    <property type="entry name" value="PLD_plant"/>
    <property type="match status" value="1"/>
</dbReference>
<dbReference type="SMART" id="SM00239">
    <property type="entry name" value="C2"/>
    <property type="match status" value="1"/>
</dbReference>
<dbReference type="SMART" id="SM00155">
    <property type="entry name" value="PLDc"/>
    <property type="match status" value="2"/>
</dbReference>
<dbReference type="SUPFAM" id="SSF49562">
    <property type="entry name" value="C2 domain (Calcium/lipid-binding domain, CaLB)"/>
    <property type="match status" value="1"/>
</dbReference>
<dbReference type="SUPFAM" id="SSF56024">
    <property type="entry name" value="Phospholipase D/nuclease"/>
    <property type="match status" value="2"/>
</dbReference>
<dbReference type="PROSITE" id="PS50004">
    <property type="entry name" value="C2"/>
    <property type="match status" value="1"/>
</dbReference>
<dbReference type="PROSITE" id="PS50035">
    <property type="entry name" value="PLD"/>
    <property type="match status" value="2"/>
</dbReference>
<protein>
    <recommendedName>
        <fullName evidence="6">Phospholipase D beta 2</fullName>
        <shortName evidence="6">AtPLDbeta2</shortName>
        <shortName evidence="6">PLD beta 2</shortName>
        <ecNumber evidence="1">3.1.4.4</ecNumber>
    </recommendedName>
    <alternativeName>
        <fullName>PLDdelta1</fullName>
    </alternativeName>
</protein>
<reference key="1">
    <citation type="journal article" date="1999" name="Nature">
        <title>Sequence and analysis of chromosome 4 of the plant Arabidopsis thaliana.</title>
        <authorList>
            <person name="Mayer K.F.X."/>
            <person name="Schueller C."/>
            <person name="Wambutt R."/>
            <person name="Murphy G."/>
            <person name="Volckaert G."/>
            <person name="Pohl T."/>
            <person name="Duesterhoeft A."/>
            <person name="Stiekema W."/>
            <person name="Entian K.-D."/>
            <person name="Terryn N."/>
            <person name="Harris B."/>
            <person name="Ansorge W."/>
            <person name="Brandt P."/>
            <person name="Grivell L.A."/>
            <person name="Rieger M."/>
            <person name="Weichselgartner M."/>
            <person name="de Simone V."/>
            <person name="Obermaier B."/>
            <person name="Mache R."/>
            <person name="Mueller M."/>
            <person name="Kreis M."/>
            <person name="Delseny M."/>
            <person name="Puigdomenech P."/>
            <person name="Watson M."/>
            <person name="Schmidtheini T."/>
            <person name="Reichert B."/>
            <person name="Portetelle D."/>
            <person name="Perez-Alonso M."/>
            <person name="Boutry M."/>
            <person name="Bancroft I."/>
            <person name="Vos P."/>
            <person name="Hoheisel J."/>
            <person name="Zimmermann W."/>
            <person name="Wedler H."/>
            <person name="Ridley P."/>
            <person name="Langham S.-A."/>
            <person name="McCullagh B."/>
            <person name="Bilham L."/>
            <person name="Robben J."/>
            <person name="van der Schueren J."/>
            <person name="Grymonprez B."/>
            <person name="Chuang Y.-J."/>
            <person name="Vandenbussche F."/>
            <person name="Braeken M."/>
            <person name="Weltjens I."/>
            <person name="Voet M."/>
            <person name="Bastiaens I."/>
            <person name="Aert R."/>
            <person name="Defoor E."/>
            <person name="Weitzenegger T."/>
            <person name="Bothe G."/>
            <person name="Ramsperger U."/>
            <person name="Hilbert H."/>
            <person name="Braun M."/>
            <person name="Holzer E."/>
            <person name="Brandt A."/>
            <person name="Peters S."/>
            <person name="van Staveren M."/>
            <person name="Dirkse W."/>
            <person name="Mooijman P."/>
            <person name="Klein Lankhorst R."/>
            <person name="Rose M."/>
            <person name="Hauf J."/>
            <person name="Koetter P."/>
            <person name="Berneiser S."/>
            <person name="Hempel S."/>
            <person name="Feldpausch M."/>
            <person name="Lamberth S."/>
            <person name="Van den Daele H."/>
            <person name="De Keyser A."/>
            <person name="Buysshaert C."/>
            <person name="Gielen J."/>
            <person name="Villarroel R."/>
            <person name="De Clercq R."/>
            <person name="van Montagu M."/>
            <person name="Rogers J."/>
            <person name="Cronin A."/>
            <person name="Quail M.A."/>
            <person name="Bray-Allen S."/>
            <person name="Clark L."/>
            <person name="Doggett J."/>
            <person name="Hall S."/>
            <person name="Kay M."/>
            <person name="Lennard N."/>
            <person name="McLay K."/>
            <person name="Mayes R."/>
            <person name="Pettett A."/>
            <person name="Rajandream M.A."/>
            <person name="Lyne M."/>
            <person name="Benes V."/>
            <person name="Rechmann S."/>
            <person name="Borkova D."/>
            <person name="Bloecker H."/>
            <person name="Scharfe M."/>
            <person name="Grimm M."/>
            <person name="Loehnert T.-H."/>
            <person name="Dose S."/>
            <person name="de Haan M."/>
            <person name="Maarse A.C."/>
            <person name="Schaefer M."/>
            <person name="Mueller-Auer S."/>
            <person name="Gabel C."/>
            <person name="Fuchs M."/>
            <person name="Fartmann B."/>
            <person name="Granderath K."/>
            <person name="Dauner D."/>
            <person name="Herzl A."/>
            <person name="Neumann S."/>
            <person name="Argiriou A."/>
            <person name="Vitale D."/>
            <person name="Liguori R."/>
            <person name="Piravandi E."/>
            <person name="Massenet O."/>
            <person name="Quigley F."/>
            <person name="Clabauld G."/>
            <person name="Muendlein A."/>
            <person name="Felber R."/>
            <person name="Schnabl S."/>
            <person name="Hiller R."/>
            <person name="Schmidt W."/>
            <person name="Lecharny A."/>
            <person name="Aubourg S."/>
            <person name="Chefdor F."/>
            <person name="Cooke R."/>
            <person name="Berger C."/>
            <person name="Monfort A."/>
            <person name="Casacuberta E."/>
            <person name="Gibbons T."/>
            <person name="Weber N."/>
            <person name="Vandenbol M."/>
            <person name="Bargues M."/>
            <person name="Terol J."/>
            <person name="Torres A."/>
            <person name="Perez-Perez A."/>
            <person name="Purnelle B."/>
            <person name="Bent E."/>
            <person name="Johnson S."/>
            <person name="Tacon D."/>
            <person name="Jesse T."/>
            <person name="Heijnen L."/>
            <person name="Schwarz S."/>
            <person name="Scholler P."/>
            <person name="Heber S."/>
            <person name="Francs P."/>
            <person name="Bielke C."/>
            <person name="Frishman D."/>
            <person name="Haase D."/>
            <person name="Lemcke K."/>
            <person name="Mewes H.-W."/>
            <person name="Stocker S."/>
            <person name="Zaccaria P."/>
            <person name="Bevan M."/>
            <person name="Wilson R.K."/>
            <person name="de la Bastide M."/>
            <person name="Habermann K."/>
            <person name="Parnell L."/>
            <person name="Dedhia N."/>
            <person name="Gnoj L."/>
            <person name="Schutz K."/>
            <person name="Huang E."/>
            <person name="Spiegel L."/>
            <person name="Sekhon M."/>
            <person name="Murray J."/>
            <person name="Sheet P."/>
            <person name="Cordes M."/>
            <person name="Abu-Threideh J."/>
            <person name="Stoneking T."/>
            <person name="Kalicki J."/>
            <person name="Graves T."/>
            <person name="Harmon G."/>
            <person name="Edwards J."/>
            <person name="Latreille P."/>
            <person name="Courtney L."/>
            <person name="Cloud J."/>
            <person name="Abbott A."/>
            <person name="Scott K."/>
            <person name="Johnson D."/>
            <person name="Minx P."/>
            <person name="Bentley D."/>
            <person name="Fulton B."/>
            <person name="Miller N."/>
            <person name="Greco T."/>
            <person name="Kemp K."/>
            <person name="Kramer J."/>
            <person name="Fulton L."/>
            <person name="Mardis E."/>
            <person name="Dante M."/>
            <person name="Pepin K."/>
            <person name="Hillier L.W."/>
            <person name="Nelson J."/>
            <person name="Spieth J."/>
            <person name="Ryan E."/>
            <person name="Andrews S."/>
            <person name="Geisel C."/>
            <person name="Layman D."/>
            <person name="Du H."/>
            <person name="Ali J."/>
            <person name="Berghoff A."/>
            <person name="Jones K."/>
            <person name="Drone K."/>
            <person name="Cotton M."/>
            <person name="Joshu C."/>
            <person name="Antonoiu B."/>
            <person name="Zidanic M."/>
            <person name="Strong C."/>
            <person name="Sun H."/>
            <person name="Lamar B."/>
            <person name="Yordan C."/>
            <person name="Ma P."/>
            <person name="Zhong J."/>
            <person name="Preston R."/>
            <person name="Vil D."/>
            <person name="Shekher M."/>
            <person name="Matero A."/>
            <person name="Shah R."/>
            <person name="Swaby I.K."/>
            <person name="O'Shaughnessy A."/>
            <person name="Rodriguez M."/>
            <person name="Hoffman J."/>
            <person name="Till S."/>
            <person name="Granat S."/>
            <person name="Shohdy N."/>
            <person name="Hasegawa A."/>
            <person name="Hameed A."/>
            <person name="Lodhi M."/>
            <person name="Johnson A."/>
            <person name="Chen E."/>
            <person name="Marra M.A."/>
            <person name="Martienssen R."/>
            <person name="McCombie W.R."/>
        </authorList>
    </citation>
    <scope>NUCLEOTIDE SEQUENCE [LARGE SCALE GENOMIC DNA]</scope>
    <source>
        <strain>cv. Columbia</strain>
    </source>
</reference>
<reference key="2">
    <citation type="journal article" date="2017" name="Plant J.">
        <title>Araport11: a complete reannotation of the Arabidopsis thaliana reference genome.</title>
        <authorList>
            <person name="Cheng C.Y."/>
            <person name="Krishnakumar V."/>
            <person name="Chan A.P."/>
            <person name="Thibaud-Nissen F."/>
            <person name="Schobel S."/>
            <person name="Town C.D."/>
        </authorList>
    </citation>
    <scope>GENOME REANNOTATION</scope>
    <source>
        <strain>cv. Columbia</strain>
    </source>
</reference>
<reference key="3">
    <citation type="journal article" date="1999" name="Plant Physiol.">
        <title>Subcellular distribution and tissue expression of phospholipase Dalpha, Dbeta, and Dgamma in Arabidopsis.</title>
        <authorList>
            <person name="Fan L."/>
            <person name="Zheng S."/>
            <person name="Cui D."/>
            <person name="Wang X."/>
        </authorList>
    </citation>
    <scope>TISSUE SPECIFICITY</scope>
</reference>
<reference key="4">
    <citation type="journal article" date="2002" name="Plant Physiol.">
        <title>The Arabidopsis phospholipase D family. Characterization of a calcium-independent and phosphatidylcholine-selective PLD zeta 1 with distinct regulatory domains.</title>
        <authorList>
            <person name="Qin C."/>
            <person name="Wang X."/>
        </authorList>
    </citation>
    <scope>GENE FAMILY</scope>
    <scope>NOMENCLATURE</scope>
</reference>
<reference key="5">
    <citation type="journal article" date="2006" name="Plant Physiol.">
        <title>Double knockouts of phospholipases Dzeta1 and Dzeta2 in Arabidopsis affect root elongation during phosphate-limited growth but do not affect root hair patterning.</title>
        <authorList>
            <person name="Li M."/>
            <person name="Qin C."/>
            <person name="Welti R."/>
            <person name="Wang X."/>
        </authorList>
    </citation>
    <scope>INDUCTION BY LOW PHOSPHATE</scope>
</reference>
<proteinExistence type="evidence at protein level"/>
<evidence type="ECO:0000250" key="1">
    <source>
        <dbReference type="UniProtKB" id="Q38882"/>
    </source>
</evidence>
<evidence type="ECO:0000255" key="2">
    <source>
        <dbReference type="PROSITE-ProRule" id="PRU00041"/>
    </source>
</evidence>
<evidence type="ECO:0000255" key="3">
    <source>
        <dbReference type="PROSITE-ProRule" id="PRU00153"/>
    </source>
</evidence>
<evidence type="ECO:0000269" key="4">
    <source>
    </source>
</evidence>
<evidence type="ECO:0000269" key="5">
    <source>
    </source>
</evidence>
<evidence type="ECO:0000303" key="6">
    <source>
    </source>
</evidence>
<evidence type="ECO:0000305" key="7"/>